<gene>
    <name evidence="1" type="primary">rpsJ</name>
    <name type="ordered locus">Ddes_0659</name>
</gene>
<proteinExistence type="inferred from homology"/>
<dbReference type="EMBL" id="CP001358">
    <property type="protein sequence ID" value="ACL48568.1"/>
    <property type="molecule type" value="Genomic_DNA"/>
</dbReference>
<dbReference type="SMR" id="B8IYH2"/>
<dbReference type="STRING" id="525146.Ddes_0659"/>
<dbReference type="KEGG" id="dds:Ddes_0659"/>
<dbReference type="eggNOG" id="COG0051">
    <property type="taxonomic scope" value="Bacteria"/>
</dbReference>
<dbReference type="HOGENOM" id="CLU_122625_1_3_7"/>
<dbReference type="GO" id="GO:1990904">
    <property type="term" value="C:ribonucleoprotein complex"/>
    <property type="evidence" value="ECO:0007669"/>
    <property type="project" value="UniProtKB-KW"/>
</dbReference>
<dbReference type="GO" id="GO:0005840">
    <property type="term" value="C:ribosome"/>
    <property type="evidence" value="ECO:0007669"/>
    <property type="project" value="UniProtKB-KW"/>
</dbReference>
<dbReference type="GO" id="GO:0003735">
    <property type="term" value="F:structural constituent of ribosome"/>
    <property type="evidence" value="ECO:0007669"/>
    <property type="project" value="InterPro"/>
</dbReference>
<dbReference type="GO" id="GO:0000049">
    <property type="term" value="F:tRNA binding"/>
    <property type="evidence" value="ECO:0007669"/>
    <property type="project" value="UniProtKB-UniRule"/>
</dbReference>
<dbReference type="GO" id="GO:0006412">
    <property type="term" value="P:translation"/>
    <property type="evidence" value="ECO:0007669"/>
    <property type="project" value="UniProtKB-UniRule"/>
</dbReference>
<dbReference type="FunFam" id="3.30.70.600:FF:000003">
    <property type="entry name" value="30S ribosomal protein S10"/>
    <property type="match status" value="1"/>
</dbReference>
<dbReference type="Gene3D" id="3.30.70.600">
    <property type="entry name" value="Ribosomal protein S10 domain"/>
    <property type="match status" value="1"/>
</dbReference>
<dbReference type="HAMAP" id="MF_00508">
    <property type="entry name" value="Ribosomal_uS10"/>
    <property type="match status" value="1"/>
</dbReference>
<dbReference type="InterPro" id="IPR001848">
    <property type="entry name" value="Ribosomal_uS10"/>
</dbReference>
<dbReference type="InterPro" id="IPR018268">
    <property type="entry name" value="Ribosomal_uS10_CS"/>
</dbReference>
<dbReference type="InterPro" id="IPR027486">
    <property type="entry name" value="Ribosomal_uS10_dom"/>
</dbReference>
<dbReference type="InterPro" id="IPR036838">
    <property type="entry name" value="Ribosomal_uS10_dom_sf"/>
</dbReference>
<dbReference type="NCBIfam" id="NF001861">
    <property type="entry name" value="PRK00596.1"/>
    <property type="match status" value="1"/>
</dbReference>
<dbReference type="NCBIfam" id="TIGR01049">
    <property type="entry name" value="rpsJ_bact"/>
    <property type="match status" value="1"/>
</dbReference>
<dbReference type="PANTHER" id="PTHR11700">
    <property type="entry name" value="30S RIBOSOMAL PROTEIN S10 FAMILY MEMBER"/>
    <property type="match status" value="1"/>
</dbReference>
<dbReference type="Pfam" id="PF00338">
    <property type="entry name" value="Ribosomal_S10"/>
    <property type="match status" value="1"/>
</dbReference>
<dbReference type="PRINTS" id="PR00971">
    <property type="entry name" value="RIBOSOMALS10"/>
</dbReference>
<dbReference type="SMART" id="SM01403">
    <property type="entry name" value="Ribosomal_S10"/>
    <property type="match status" value="1"/>
</dbReference>
<dbReference type="SUPFAM" id="SSF54999">
    <property type="entry name" value="Ribosomal protein S10"/>
    <property type="match status" value="1"/>
</dbReference>
<dbReference type="PROSITE" id="PS00361">
    <property type="entry name" value="RIBOSOMAL_S10"/>
    <property type="match status" value="1"/>
</dbReference>
<comment type="function">
    <text evidence="1">Involved in the binding of tRNA to the ribosomes.</text>
</comment>
<comment type="subunit">
    <text evidence="1">Part of the 30S ribosomal subunit.</text>
</comment>
<comment type="similarity">
    <text evidence="1">Belongs to the universal ribosomal protein uS10 family.</text>
</comment>
<keyword id="KW-0687">Ribonucleoprotein</keyword>
<keyword id="KW-0689">Ribosomal protein</keyword>
<protein>
    <recommendedName>
        <fullName evidence="1">Small ribosomal subunit protein uS10</fullName>
    </recommendedName>
    <alternativeName>
        <fullName evidence="2">30S ribosomal protein S10</fullName>
    </alternativeName>
</protein>
<sequence>MTTVSSDRIRIKLKAYDYRILDKAVAEIVDTARNTGAGVAGPIPLPTNIHKYTIQRSVHVDKKSREQFEMRIHKRLMDILEPTQQTVDALGKLSLPAGVDVEIKL</sequence>
<name>RS10_DESDA</name>
<evidence type="ECO:0000255" key="1">
    <source>
        <dbReference type="HAMAP-Rule" id="MF_00508"/>
    </source>
</evidence>
<evidence type="ECO:0000305" key="2"/>
<feature type="chain" id="PRO_1000196306" description="Small ribosomal subunit protein uS10">
    <location>
        <begin position="1"/>
        <end position="105"/>
    </location>
</feature>
<reference key="1">
    <citation type="submission" date="2009-01" db="EMBL/GenBank/DDBJ databases">
        <title>Complete sequence of Desulfovibrio desulfuricans subsp. desulfuricans str. ATCC 27774.</title>
        <authorList>
            <consortium name="US DOE Joint Genome Institute"/>
            <person name="Lucas S."/>
            <person name="Copeland A."/>
            <person name="Lapidus A."/>
            <person name="Glavina del Rio T."/>
            <person name="Tice H."/>
            <person name="Bruce D."/>
            <person name="Goodwin L."/>
            <person name="Pitluck S."/>
            <person name="Sims D."/>
            <person name="Lu M."/>
            <person name="Kiss H."/>
            <person name="Meineke L."/>
            <person name="Brettin T."/>
            <person name="Detter J.C."/>
            <person name="Han C."/>
            <person name="Larimer F."/>
            <person name="Land M."/>
            <person name="Hauser L."/>
            <person name="Kyrpides N."/>
            <person name="Ovchinnikova G."/>
            <person name="Hazen T.C."/>
        </authorList>
    </citation>
    <scope>NUCLEOTIDE SEQUENCE [LARGE SCALE GENOMIC DNA]</scope>
    <source>
        <strain>ATCC 27774 / DSM 6949 / MB</strain>
    </source>
</reference>
<organism>
    <name type="scientific">Desulfovibrio desulfuricans (strain ATCC 27774 / DSM 6949 / MB)</name>
    <dbReference type="NCBI Taxonomy" id="525146"/>
    <lineage>
        <taxon>Bacteria</taxon>
        <taxon>Pseudomonadati</taxon>
        <taxon>Thermodesulfobacteriota</taxon>
        <taxon>Desulfovibrionia</taxon>
        <taxon>Desulfovibrionales</taxon>
        <taxon>Desulfovibrionaceae</taxon>
        <taxon>Desulfovibrio</taxon>
    </lineage>
</organism>
<accession>B8IYH2</accession>